<protein>
    <recommendedName>
        <fullName>Dysbindin</fullName>
    </recommendedName>
    <alternativeName>
        <fullName>Biogenesis of lysosome-related organelles complex 1 subunit 8</fullName>
        <shortName>BLOC-1 subunit 8</shortName>
    </alternativeName>
    <alternativeName>
        <fullName>Dysbindin-1</fullName>
    </alternativeName>
    <alternativeName>
        <fullName>Dystrobrevin-binding protein 1</fullName>
    </alternativeName>
</protein>
<name>DTBP1_RAT</name>
<feature type="chain" id="PRO_0000267210" description="Dysbindin">
    <location>
        <begin position="1"/>
        <end position="352"/>
    </location>
</feature>
<feature type="region of interest" description="Disordered" evidence="5">
    <location>
        <begin position="267"/>
        <end position="352"/>
    </location>
</feature>
<feature type="coiled-coil region" evidence="4">
    <location>
        <begin position="92"/>
        <end position="180"/>
    </location>
</feature>
<feature type="short sequence motif" description="Nuclear export signal" evidence="1">
    <location>
        <begin position="243"/>
        <end position="256"/>
    </location>
</feature>
<feature type="compositionally biased region" description="Polar residues" evidence="5">
    <location>
        <begin position="274"/>
        <end position="285"/>
    </location>
</feature>
<feature type="compositionally biased region" description="Low complexity" evidence="5">
    <location>
        <begin position="286"/>
        <end position="301"/>
    </location>
</feature>
<feature type="modified residue" description="Phosphoserine" evidence="3">
    <location>
        <position position="11"/>
    </location>
</feature>
<feature type="modified residue" description="Phosphoserine" evidence="2">
    <location>
        <position position="340"/>
    </location>
</feature>
<feature type="modified residue" description="Phosphoserine" evidence="2">
    <location>
        <position position="343"/>
    </location>
</feature>
<evidence type="ECO:0000250" key="1"/>
<evidence type="ECO:0000250" key="2">
    <source>
        <dbReference type="UniProtKB" id="Q91WZ8"/>
    </source>
</evidence>
<evidence type="ECO:0000250" key="3">
    <source>
        <dbReference type="UniProtKB" id="Q96EV8"/>
    </source>
</evidence>
<evidence type="ECO:0000255" key="4"/>
<evidence type="ECO:0000256" key="5">
    <source>
        <dbReference type="SAM" id="MobiDB-lite"/>
    </source>
</evidence>
<evidence type="ECO:0000269" key="6">
    <source>
    </source>
</evidence>
<evidence type="ECO:0000269" key="7">
    <source>
    </source>
</evidence>
<evidence type="ECO:0000269" key="8">
    <source>
    </source>
</evidence>
<evidence type="ECO:0000269" key="9">
    <source>
    </source>
</evidence>
<evidence type="ECO:0000269" key="10">
    <source>
    </source>
</evidence>
<evidence type="ECO:0000269" key="11">
    <source>
    </source>
</evidence>
<evidence type="ECO:0000305" key="12"/>
<proteinExistence type="evidence at protein level"/>
<dbReference type="EMBL" id="AY623026">
    <property type="protein sequence ID" value="AAT46043.1"/>
    <property type="molecule type" value="mRNA"/>
</dbReference>
<dbReference type="EMBL" id="BC088267">
    <property type="protein sequence ID" value="AAH88267.1"/>
    <property type="molecule type" value="mRNA"/>
</dbReference>
<dbReference type="RefSeq" id="NP_001032753.1">
    <property type="nucleotide sequence ID" value="NM_001037664.1"/>
</dbReference>
<dbReference type="SMR" id="Q5M834"/>
<dbReference type="BioGRID" id="566020">
    <property type="interactions" value="2"/>
</dbReference>
<dbReference type="FunCoup" id="Q5M834">
    <property type="interactions" value="579"/>
</dbReference>
<dbReference type="IntAct" id="Q5M834">
    <property type="interactions" value="3"/>
</dbReference>
<dbReference type="STRING" id="10116.ENSRNOP00000067149"/>
<dbReference type="GlyGen" id="Q5M834">
    <property type="glycosylation" value="1 site, 1 O-linked glycan (1 site)"/>
</dbReference>
<dbReference type="PhosphoSitePlus" id="Q5M834"/>
<dbReference type="PaxDb" id="10116-ENSRNOP00000067149"/>
<dbReference type="Ensembl" id="ENSRNOT00000102493.1">
    <property type="protein sequence ID" value="ENSRNOP00000091788.1"/>
    <property type="gene ID" value="ENSRNOG00000048719.3"/>
</dbReference>
<dbReference type="GeneID" id="641528"/>
<dbReference type="KEGG" id="rno:641528"/>
<dbReference type="AGR" id="RGD:1590759"/>
<dbReference type="CTD" id="84062"/>
<dbReference type="RGD" id="1590759">
    <property type="gene designation" value="Dtnbp1"/>
</dbReference>
<dbReference type="eggNOG" id="ENOG502QRS9">
    <property type="taxonomic scope" value="Eukaryota"/>
</dbReference>
<dbReference type="GeneTree" id="ENSGT00940000156479"/>
<dbReference type="InParanoid" id="Q5M834"/>
<dbReference type="OMA" id="KSWFLLH"/>
<dbReference type="OrthoDB" id="2445127at2759"/>
<dbReference type="PhylomeDB" id="Q5M834"/>
<dbReference type="Reactome" id="R-RNO-432722">
    <property type="pathway name" value="Golgi Associated Vesicle Biogenesis"/>
</dbReference>
<dbReference type="PRO" id="PR:Q5M834"/>
<dbReference type="Proteomes" id="UP000002494">
    <property type="component" value="Chromosome 17"/>
</dbReference>
<dbReference type="GO" id="GO:0032279">
    <property type="term" value="C:asymmetric synapse"/>
    <property type="evidence" value="ECO:0000266"/>
    <property type="project" value="RGD"/>
</dbReference>
<dbReference type="GO" id="GO:0030424">
    <property type="term" value="C:axon"/>
    <property type="evidence" value="ECO:0000314"/>
    <property type="project" value="RGD"/>
</dbReference>
<dbReference type="GO" id="GO:1904115">
    <property type="term" value="C:axon cytoplasm"/>
    <property type="evidence" value="ECO:0007669"/>
    <property type="project" value="GOC"/>
</dbReference>
<dbReference type="GO" id="GO:0031083">
    <property type="term" value="C:BLOC-1 complex"/>
    <property type="evidence" value="ECO:0000250"/>
    <property type="project" value="UniProtKB"/>
</dbReference>
<dbReference type="GO" id="GO:0005737">
    <property type="term" value="C:cytoplasm"/>
    <property type="evidence" value="ECO:0000266"/>
    <property type="project" value="RGD"/>
</dbReference>
<dbReference type="GO" id="GO:0043197">
    <property type="term" value="C:dendritic spine"/>
    <property type="evidence" value="ECO:0000314"/>
    <property type="project" value="RGD"/>
</dbReference>
<dbReference type="GO" id="GO:0005789">
    <property type="term" value="C:endoplasmic reticulum membrane"/>
    <property type="evidence" value="ECO:0000250"/>
    <property type="project" value="UniProtKB"/>
</dbReference>
<dbReference type="GO" id="GO:0010008">
    <property type="term" value="C:endosome membrane"/>
    <property type="evidence" value="ECO:0007669"/>
    <property type="project" value="UniProtKB-SubCell"/>
</dbReference>
<dbReference type="GO" id="GO:0098978">
    <property type="term" value="C:glutamatergic synapse"/>
    <property type="evidence" value="ECO:0000266"/>
    <property type="project" value="RGD"/>
</dbReference>
<dbReference type="GO" id="GO:0030426">
    <property type="term" value="C:growth cone"/>
    <property type="evidence" value="ECO:0000250"/>
    <property type="project" value="UniProtKB"/>
</dbReference>
<dbReference type="GO" id="GO:0098686">
    <property type="term" value="C:hippocampal mossy fiber to CA3 synapse"/>
    <property type="evidence" value="ECO:0000266"/>
    <property type="project" value="RGD"/>
</dbReference>
<dbReference type="GO" id="GO:0033162">
    <property type="term" value="C:melanosome membrane"/>
    <property type="evidence" value="ECO:0007669"/>
    <property type="project" value="UniProtKB-SubCell"/>
</dbReference>
<dbReference type="GO" id="GO:0015630">
    <property type="term" value="C:microtubule cytoskeleton"/>
    <property type="evidence" value="ECO:0007669"/>
    <property type="project" value="Ensembl"/>
</dbReference>
<dbReference type="GO" id="GO:0030496">
    <property type="term" value="C:midbody"/>
    <property type="evidence" value="ECO:0007669"/>
    <property type="project" value="Ensembl"/>
</dbReference>
<dbReference type="GO" id="GO:0043005">
    <property type="term" value="C:neuron projection"/>
    <property type="evidence" value="ECO:0000250"/>
    <property type="project" value="UniProtKB"/>
</dbReference>
<dbReference type="GO" id="GO:0043025">
    <property type="term" value="C:neuronal cell body"/>
    <property type="evidence" value="ECO:0000314"/>
    <property type="project" value="RGD"/>
</dbReference>
<dbReference type="GO" id="GO:0005634">
    <property type="term" value="C:nucleus"/>
    <property type="evidence" value="ECO:0000266"/>
    <property type="project" value="RGD"/>
</dbReference>
<dbReference type="GO" id="GO:0005886">
    <property type="term" value="C:plasma membrane"/>
    <property type="evidence" value="ECO:0000266"/>
    <property type="project" value="RGD"/>
</dbReference>
<dbReference type="GO" id="GO:0014069">
    <property type="term" value="C:postsynaptic density"/>
    <property type="evidence" value="ECO:0000250"/>
    <property type="project" value="UniProtKB"/>
</dbReference>
<dbReference type="GO" id="GO:0042734">
    <property type="term" value="C:presynaptic membrane"/>
    <property type="evidence" value="ECO:0007669"/>
    <property type="project" value="UniProtKB-SubCell"/>
</dbReference>
<dbReference type="GO" id="GO:0042383">
    <property type="term" value="C:sarcolemma"/>
    <property type="evidence" value="ECO:0000266"/>
    <property type="project" value="RGD"/>
</dbReference>
<dbReference type="GO" id="GO:0016528">
    <property type="term" value="C:sarcoplasm"/>
    <property type="evidence" value="ECO:0000266"/>
    <property type="project" value="RGD"/>
</dbReference>
<dbReference type="GO" id="GO:0098685">
    <property type="term" value="C:Schaffer collateral - CA1 synapse"/>
    <property type="evidence" value="ECO:0000266"/>
    <property type="project" value="RGD"/>
</dbReference>
<dbReference type="GO" id="GO:0030672">
    <property type="term" value="C:synaptic vesicle membrane"/>
    <property type="evidence" value="ECO:0000314"/>
    <property type="project" value="UniProtKB"/>
</dbReference>
<dbReference type="GO" id="GO:0030036">
    <property type="term" value="P:actin cytoskeleton organization"/>
    <property type="evidence" value="ECO:0000250"/>
    <property type="project" value="UniProtKB"/>
</dbReference>
<dbReference type="GO" id="GO:0008089">
    <property type="term" value="P:anterograde axonal transport"/>
    <property type="evidence" value="ECO:0000250"/>
    <property type="project" value="UniProtKB"/>
</dbReference>
<dbReference type="GO" id="GO:0048490">
    <property type="term" value="P:anterograde synaptic vesicle transport"/>
    <property type="evidence" value="ECO:0000250"/>
    <property type="project" value="UniProtKB"/>
</dbReference>
<dbReference type="GO" id="GO:0007596">
    <property type="term" value="P:blood coagulation"/>
    <property type="evidence" value="ECO:0000266"/>
    <property type="project" value="RGD"/>
</dbReference>
<dbReference type="GO" id="GO:0060271">
    <property type="term" value="P:cilium assembly"/>
    <property type="evidence" value="ECO:0000266"/>
    <property type="project" value="RGD"/>
</dbReference>
<dbReference type="GO" id="GO:0048813">
    <property type="term" value="P:dendrite morphogenesis"/>
    <property type="evidence" value="ECO:0000266"/>
    <property type="project" value="RGD"/>
</dbReference>
<dbReference type="GO" id="GO:0001822">
    <property type="term" value="P:kidney development"/>
    <property type="evidence" value="ECO:0000266"/>
    <property type="project" value="RGD"/>
</dbReference>
<dbReference type="GO" id="GO:0007613">
    <property type="term" value="P:memory"/>
    <property type="evidence" value="ECO:0000266"/>
    <property type="project" value="RGD"/>
</dbReference>
<dbReference type="GO" id="GO:0061002">
    <property type="term" value="P:negative regulation of dendritic spine morphogenesis"/>
    <property type="evidence" value="ECO:0000314"/>
    <property type="project" value="RGD"/>
</dbReference>
<dbReference type="GO" id="GO:0031175">
    <property type="term" value="P:neuron projection development"/>
    <property type="evidence" value="ECO:0000250"/>
    <property type="project" value="UniProtKB"/>
</dbReference>
<dbReference type="GO" id="GO:0048812">
    <property type="term" value="P:neuron projection morphogenesis"/>
    <property type="evidence" value="ECO:0000250"/>
    <property type="project" value="UniProtKB"/>
</dbReference>
<dbReference type="GO" id="GO:0060155">
    <property type="term" value="P:platelet dense granule organization"/>
    <property type="evidence" value="ECO:0000266"/>
    <property type="project" value="RGD"/>
</dbReference>
<dbReference type="GO" id="GO:0010628">
    <property type="term" value="P:positive regulation of gene expression"/>
    <property type="evidence" value="ECO:0000250"/>
    <property type="project" value="UniProtKB"/>
</dbReference>
<dbReference type="GO" id="GO:0061646">
    <property type="term" value="P:positive regulation of glutamate neurotransmitter secretion in response to membrane depolarization"/>
    <property type="evidence" value="ECO:0000315"/>
    <property type="project" value="RGD"/>
</dbReference>
<dbReference type="GO" id="GO:0001956">
    <property type="term" value="P:positive regulation of neurotransmitter secretion"/>
    <property type="evidence" value="ECO:0000250"/>
    <property type="project" value="UniProtKB"/>
</dbReference>
<dbReference type="GO" id="GO:0002092">
    <property type="term" value="P:positive regulation of receptor internalization"/>
    <property type="evidence" value="ECO:0000315"/>
    <property type="project" value="RGD"/>
</dbReference>
<dbReference type="GO" id="GO:0071806">
    <property type="term" value="P:protein transmembrane transport"/>
    <property type="evidence" value="ECO:0000266"/>
    <property type="project" value="RGD"/>
</dbReference>
<dbReference type="GO" id="GO:0060159">
    <property type="term" value="P:regulation of dopamine receptor signaling pathway"/>
    <property type="evidence" value="ECO:0000314"/>
    <property type="project" value="UniProtKB"/>
</dbReference>
<dbReference type="GO" id="GO:0014059">
    <property type="term" value="P:regulation of dopamine secretion"/>
    <property type="evidence" value="ECO:0000250"/>
    <property type="project" value="UniProtKB"/>
</dbReference>
<dbReference type="GO" id="GO:0009966">
    <property type="term" value="P:regulation of signal transduction"/>
    <property type="evidence" value="ECO:0000318"/>
    <property type="project" value="GO_Central"/>
</dbReference>
<dbReference type="GO" id="GO:2000300">
    <property type="term" value="P:regulation of synaptic vesicle exocytosis"/>
    <property type="evidence" value="ECO:0000266"/>
    <property type="project" value="RGD"/>
</dbReference>
<dbReference type="GO" id="GO:0060041">
    <property type="term" value="P:retina development in camera-type eye"/>
    <property type="evidence" value="ECO:0000270"/>
    <property type="project" value="RGD"/>
</dbReference>
<dbReference type="InterPro" id="IPR007531">
    <property type="entry name" value="Dysbindin"/>
</dbReference>
<dbReference type="PANTHER" id="PTHR16294:SF5">
    <property type="entry name" value="DYSBINDIN"/>
    <property type="match status" value="1"/>
</dbReference>
<dbReference type="PANTHER" id="PTHR16294">
    <property type="entry name" value="DYSTROBREVIN BINDING PROTEIN 1 DYSBINDIN"/>
    <property type="match status" value="1"/>
</dbReference>
<dbReference type="Pfam" id="PF04440">
    <property type="entry name" value="Dysbindin"/>
    <property type="match status" value="1"/>
</dbReference>
<keyword id="KW-1003">Cell membrane</keyword>
<keyword id="KW-0966">Cell projection</keyword>
<keyword id="KW-0175">Coiled coil</keyword>
<keyword id="KW-0963">Cytoplasm</keyword>
<keyword id="KW-0968">Cytoplasmic vesicle</keyword>
<keyword id="KW-0256">Endoplasmic reticulum</keyword>
<keyword id="KW-0967">Endosome</keyword>
<keyword id="KW-0472">Membrane</keyword>
<keyword id="KW-0539">Nucleus</keyword>
<keyword id="KW-0597">Phosphoprotein</keyword>
<keyword id="KW-1185">Reference proteome</keyword>
<keyword id="KW-0770">Synapse</keyword>
<keyword id="KW-0832">Ubl conjugation</keyword>
<organism>
    <name type="scientific">Rattus norvegicus</name>
    <name type="common">Rat</name>
    <dbReference type="NCBI Taxonomy" id="10116"/>
    <lineage>
        <taxon>Eukaryota</taxon>
        <taxon>Metazoa</taxon>
        <taxon>Chordata</taxon>
        <taxon>Craniata</taxon>
        <taxon>Vertebrata</taxon>
        <taxon>Euteleostomi</taxon>
        <taxon>Mammalia</taxon>
        <taxon>Eutheria</taxon>
        <taxon>Euarchontoglires</taxon>
        <taxon>Glires</taxon>
        <taxon>Rodentia</taxon>
        <taxon>Myomorpha</taxon>
        <taxon>Muroidea</taxon>
        <taxon>Muridae</taxon>
        <taxon>Murinae</taxon>
        <taxon>Rattus</taxon>
    </lineage>
</organism>
<comment type="function">
    <text evidence="7 8 9 11">Component of the BLOC-1 complex, a complex that is required for normal biogenesis of lysosome-related organelles (LRO), such as platelet dense granules and melanosomes. In concert with the AP-3 complex, the BLOC-1 complex is required to target membrane protein cargos into vesicles assembled at cell bodies for delivery into neurites and nerve terminals. The BLOC-1 complex, in association with SNARE proteins, is also proposed to be involved in neurite extension. Associates with the BLOC-2 complex to facilitate the transport of TYRP1 independent of AP-3 function. Plays a role in synaptic vesicle trafficking and in neurotransmitter release. Plays a role in the regulation of cell surface exposure of DRD2. May play a role in actin cytoskeleton reorganization and neurite outgrowth. May modulate MAPK8 phosphorylation. Appears to promote neuronal transmission and viability through regulating the expression of SNAP25 and SYN1, modulating PI3-kinase-Akt signaling and influencing glutamatergic release. Regulates the expression of SYN1 through binding to its promoter. Modulates prefrontal cortical activity via the dopamine/D2 pathway.</text>
</comment>
<comment type="subunit">
    <text evidence="1 6 7 8 10 11">Interacts (via its coiled coil domain) with KXD1. Interacts with AP3B2, TRIM32, CMYA5, PI4K2 and RNF151. Interacts with the DNA-dependent protein kinase complex DNA-PK; the interaction phosphorylates DTNBP1 in vitro. Interacts directly in this complex with XRCC5 and XRCC6. Interacts with XPO1; the interaction exports DTNBP1 out of the nucleus (By similarity). Component of the biogenesis of lysosome-related organelles complex 1 (BLOC-1) composed of at least BLOC1S1, BLOC1S2, BLOC1S3, BLOC1S4, BLOC1S5, BLOC1S6, DTNBP1/BLOC1S7 and SNAPIN/BLOC1S8. Interacts directly in the complex with BLOC1S5, BLOC1S6 and SNAPIN/BLOC1S8. The BLOC-1 complex associates with the AP-3 protein complex and membrane protein cargos. This BLOC-1 complex also associates with the BLOC-2 complex in endosomes. Binds to DTNA and DTNB but may not be a physiological binding partner. Interacts with AP3M1.</text>
</comment>
<comment type="subcellular location">
    <subcellularLocation>
        <location evidence="1">Cytoplasm</location>
    </subcellularLocation>
    <subcellularLocation>
        <location evidence="1">Cytoplasmic vesicle membrane</location>
        <topology evidence="1">Peripheral membrane protein</topology>
        <orientation evidence="1">Cytoplasmic side</orientation>
    </subcellularLocation>
    <subcellularLocation>
        <location evidence="11">Cytoplasmic vesicle</location>
        <location evidence="11">Secretory vesicle</location>
        <location evidence="11">Synaptic vesicle membrane</location>
        <topology evidence="11">Peripheral membrane protein</topology>
        <orientation evidence="11">Cytoplasmic side</orientation>
    </subcellularLocation>
    <subcellularLocation>
        <location evidence="11">Endosome membrane</location>
        <topology evidence="11">Peripheral membrane protein</topology>
        <orientation evidence="11">Cytoplasmic side</orientation>
    </subcellularLocation>
    <subcellularLocation>
        <location evidence="1">Melanosome membrane</location>
        <topology evidence="1">Peripheral membrane protein</topology>
        <orientation evidence="1">Cytoplasmic side</orientation>
    </subcellularLocation>
    <subcellularLocation>
        <location evidence="1">Nucleus</location>
    </subcellularLocation>
    <subcellularLocation>
        <location evidence="11">Postsynaptic density</location>
    </subcellularLocation>
    <subcellularLocation>
        <location evidence="11">Presynaptic cell membrane</location>
    </subcellularLocation>
    <subcellularLocation>
        <location evidence="1">Endoplasmic reticulum</location>
    </subcellularLocation>
    <text evidence="1">Mainly cytoplasmic but shuttles between the cytoplasm and nucleus. Exported out of the nucleus via its NES in a XPO1-dependent manner. Nuclear localization is required for regulation of the expression of genes such as SYN1 (By similarity). Detected in neuron cell bodies, axons and dendrites. Detected at synapses, at postsynaptic density, at presynaptic vesicle membranes and microtubules. Associated with the AP-3 complex at presynaptic terminals. Detected at tubulovesicular elements in the vicinity of the Golgi apparatus and of melanosomes. Occasionally detected at the membrane of pigmented melanosomes in cultured melanoma cells (By similarity). The BLOC-1 complex associates with the BLOC-2 complex in early endosome-associated tubules. Associated with the AP-3 complex at presynaptic terminals.</text>
</comment>
<comment type="tissue specificity">
    <text evidence="6 7 11">Detected in hippocampus neurons (at protein level). Ubiquitously expressed. The highest expression is observed in testis, liver, kidney, brain, heart and lung. In the brain, found primarily in axon bundles and axon terminals, notably in the cerebellum and hippocampus. Expressed at lower levels in stomach, small intestine and skeletal muscle, where it is detected at the sarcolemma.</text>
</comment>
<comment type="PTM">
    <text evidence="1">Ubiquitinated by TRIM32. Ubiquitination leads to DTNBP1 degradation.</text>
</comment>
<comment type="similarity">
    <text evidence="12">Belongs to the dysbindin family.</text>
</comment>
<sequence>MLETLRERLLSVQQDFTSGLKTLSDKSKEAKVKSRPRTAPYLPKYSAGLDLLSRYEDTWAALHRRAKECADAGELVDSEVVMLSAHWEKKRTSLAELQEQLQQLPALLQDVESLMASLAHLETSFEEVENHLLHLEDLCGQCELERHKQAHARHLEDYKKSKRKELEAFKAELDTEHAQKILEMEHTQQLKLKERQKFFEEAFQQDMEQYLSTGHLQIAERREPMGSMSSMEVNVDVLEQMDLMDLSDQEALDVFLNSGGEDNTVISPGLEMESNPSQNEMNLQIPNPSESASQPPASPSACTDLDTADAPLIQADEEEVQVDTALVTLNTDRKSTPGVSDDSDQCDSTQDI</sequence>
<reference key="1">
    <citation type="journal article" date="2006" name="Oncogene">
        <title>Identification of novel E2F1 target genes regulated in cell cycle-dependent and independent manners.</title>
        <authorList>
            <person name="Iwanaga R."/>
            <person name="Komori H."/>
            <person name="Ishida S."/>
            <person name="Okamura N."/>
            <person name="Nakayama K."/>
            <person name="Nakayama K."/>
            <person name="Ohtani K."/>
        </authorList>
    </citation>
    <scope>NUCLEOTIDE SEQUENCE [LARGE SCALE MRNA]</scope>
</reference>
<reference key="2">
    <citation type="journal article" date="2004" name="Genome Res.">
        <title>The status, quality, and expansion of the NIH full-length cDNA project: the Mammalian Gene Collection (MGC).</title>
        <authorList>
            <consortium name="The MGC Project Team"/>
        </authorList>
    </citation>
    <scope>NUCLEOTIDE SEQUENCE [LARGE SCALE MRNA]</scope>
    <source>
        <tissue>Spleen</tissue>
    </source>
</reference>
<reference key="3">
    <citation type="journal article" date="2001" name="J. Biol. Chem.">
        <title>Dysbindin, a novel coiled-coil-containing protein that interacts with the dystrobrevins in muscle and brain.</title>
        <authorList>
            <person name="Benson M.A."/>
            <person name="Newey S.E."/>
            <person name="Martin-Rendon E."/>
            <person name="Hawkes R."/>
            <person name="Blake D.J."/>
        </authorList>
    </citation>
    <scope>TISSUE SPECIFICITY</scope>
    <scope>INTERACTION WITH DTNA AND DTNB</scope>
</reference>
<reference key="4">
    <citation type="journal article" date="2006" name="Biochem. J.">
        <title>Reinvestigation of the dysbindin subunit of BLOC-1 (biogenesis of lysosome-related organelles complex-1) as a dystrobrevin-binding protein.</title>
        <authorList>
            <person name="Nazarian R."/>
            <person name="Starcevic M."/>
            <person name="Spencer M.J."/>
            <person name="Dell'Angelica E.C."/>
        </authorList>
    </citation>
    <scope>FUNCTION</scope>
    <scope>TISSUE SPECIFICITY</scope>
    <scope>INTERACTION WITH DTNA; DTNB AND BLOC1S6</scope>
</reference>
<reference key="5">
    <citation type="journal article" date="2006" name="Mol. Biol. Cell">
        <title>BLOC-1 complex deficiency alters the targeting of adaptor protein complex-3 cargoes.</title>
        <authorList>
            <person name="Salazar G."/>
            <person name="Craige B."/>
            <person name="Styers M.L."/>
            <person name="Newell-Litwa K.A."/>
            <person name="Doucette M.M."/>
            <person name="Wainer B.H."/>
            <person name="Falcon-Perez J.M."/>
            <person name="Dell'Angelica E.C."/>
            <person name="Peden A.A."/>
            <person name="Werner E."/>
            <person name="Faundez V."/>
        </authorList>
    </citation>
    <scope>IDENTIFICATION IN THE BLOC-1 COMPLEX</scope>
    <scope>FUNCTION</scope>
    <scope>IDENTIFICATION BY MASS SPECTROMETRY</scope>
</reference>
<reference key="6">
    <citation type="journal article" date="2007" name="J. Neurosci.">
        <title>Evidence that the BLOC-1 protein dysbindin modulates dopamine D2 receptor internalization and signaling but not D1 internalization.</title>
        <authorList>
            <person name="Iizuka Y."/>
            <person name="Sei Y."/>
            <person name="Weinberger D.R."/>
            <person name="Straub R.E."/>
        </authorList>
    </citation>
    <scope>FUNCTION</scope>
</reference>
<reference key="7">
    <citation type="book" date="2009" name="Handbook of neurochemistry and molecular neurobiology (3rd ed.)">
        <title>Dysbindin-1 and its protein family with special attention to the potential role of dysbindin-1 in neuronal functions and the pathophysiology of schizophrenia.</title>
        <editorList>
            <person name="Javitt D.C."/>
            <person name="Kantrowitz J."/>
        </editorList>
        <authorList>
            <person name="Talbot K."/>
            <person name="Ong W.-Y."/>
            <person name="Blake D.J."/>
            <person name="Tang J."/>
            <person name="Louneva N."/>
            <person name="Carlson G.C."/>
            <person name="Arnold S.E."/>
        </authorList>
    </citation>
    <scope>REVIEW</scope>
</reference>
<reference key="8">
    <citation type="journal article" date="2009" name="J. Biol. Chem.">
        <title>Hermansky-Pudlak syndrome protein complexes associate with phosphatidylinositol 4-kinase type II alpha in neuronal and non-neuronal cells.</title>
        <authorList>
            <person name="Salazar G."/>
            <person name="Zlatic S."/>
            <person name="Craige B."/>
            <person name="Peden A.A."/>
            <person name="Pohl J."/>
            <person name="Faundez V."/>
        </authorList>
    </citation>
    <scope>IDENTIFICATION IN A COMPLEX WITH AP-3 COMPLEX</scope>
</reference>
<reference key="9">
    <citation type="journal article" date="2009" name="Neurochem. Int.">
        <title>Direct interaction of dysbindin with the AP-3 complex via its mu subunit.</title>
        <authorList>
            <person name="Taneichi-Kuroda S."/>
            <person name="Taya S."/>
            <person name="Hikita T."/>
            <person name="Fujino Y."/>
            <person name="Kaibuchi K."/>
        </authorList>
    </citation>
    <scope>INTERACTION WITH AP3M1</scope>
    <scope>FUNCTION</scope>
    <scope>TISSUE SPECIFICITY</scope>
    <scope>SUBCELLULAR LOCATION</scope>
</reference>
<gene>
    <name type="primary">Dtnbp1</name>
    <name type="synonym">Bloc1s8</name>
</gene>
<accession>Q5M834</accession>
<accession>Q6GX90</accession>